<feature type="chain" id="PRO_0000184705" description="NADH peroxidase">
    <location>
        <begin position="1"/>
        <end position="447"/>
    </location>
</feature>
<feature type="active site" description="Proton acceptor" evidence="2">
    <location>
        <position position="10"/>
    </location>
</feature>
<feature type="active site" description="Redox-active" evidence="2">
    <location>
        <position position="42"/>
    </location>
</feature>
<feature type="binding site" evidence="1 2">
    <location>
        <begin position="7"/>
        <end position="11"/>
    </location>
    <ligand>
        <name>FAD</name>
        <dbReference type="ChEBI" id="CHEBI:57692"/>
    </ligand>
</feature>
<feature type="binding site" evidence="1 2">
    <location>
        <position position="32"/>
    </location>
    <ligand>
        <name>FAD</name>
        <dbReference type="ChEBI" id="CHEBI:57692"/>
    </ligand>
</feature>
<feature type="binding site" evidence="1 2">
    <location>
        <position position="42"/>
    </location>
    <ligand>
        <name>FAD</name>
        <dbReference type="ChEBI" id="CHEBI:57692"/>
    </ligand>
</feature>
<feature type="binding site" evidence="1 2">
    <location>
        <begin position="110"/>
        <end position="113"/>
    </location>
    <ligand>
        <name>FAD</name>
        <dbReference type="ChEBI" id="CHEBI:57692"/>
    </ligand>
</feature>
<feature type="binding site" evidence="1 2">
    <location>
        <position position="132"/>
    </location>
    <ligand>
        <name>FAD</name>
        <dbReference type="ChEBI" id="CHEBI:57692"/>
    </ligand>
</feature>
<feature type="binding site" evidence="1">
    <location>
        <position position="160"/>
    </location>
    <ligand>
        <name>NAD(+)</name>
        <dbReference type="ChEBI" id="CHEBI:57540"/>
    </ligand>
</feature>
<feature type="binding site" evidence="1">
    <location>
        <position position="179"/>
    </location>
    <ligand>
        <name>NAD(+)</name>
        <dbReference type="ChEBI" id="CHEBI:57540"/>
    </ligand>
</feature>
<feature type="binding site" evidence="1">
    <location>
        <position position="188"/>
    </location>
    <ligand>
        <name>NAD(+)</name>
        <dbReference type="ChEBI" id="CHEBI:57540"/>
    </ligand>
</feature>
<feature type="binding site" evidence="1">
    <location>
        <position position="243"/>
    </location>
    <ligand>
        <name>NAD(+)</name>
        <dbReference type="ChEBI" id="CHEBI:57540"/>
    </ligand>
</feature>
<feature type="binding site" evidence="1 2">
    <location>
        <position position="281"/>
    </location>
    <ligand>
        <name>FAD</name>
        <dbReference type="ChEBI" id="CHEBI:57692"/>
    </ligand>
</feature>
<feature type="binding site" evidence="1">
    <location>
        <position position="297"/>
    </location>
    <ligand>
        <name>NAD(+)</name>
        <dbReference type="ChEBI" id="CHEBI:57540"/>
    </ligand>
</feature>
<feature type="binding site" evidence="1 2">
    <location>
        <position position="299"/>
    </location>
    <ligand>
        <name>FAD</name>
        <dbReference type="ChEBI" id="CHEBI:57692"/>
    </ligand>
</feature>
<feature type="binding site" evidence="1">
    <location>
        <position position="328"/>
    </location>
    <ligand>
        <name>NAD(+)</name>
        <dbReference type="ChEBI" id="CHEBI:57540"/>
    </ligand>
</feature>
<feature type="modified residue" description="Cysteine sulfenic acid (-SOH)" evidence="2">
    <location>
        <position position="42"/>
    </location>
</feature>
<feature type="sequence conflict" description="In Ref. 1; CAA44611." evidence="3" ref="1">
    <original>I</original>
    <variation>V</variation>
    <location>
        <position position="226"/>
    </location>
</feature>
<feature type="strand" evidence="4">
    <location>
        <begin position="2"/>
        <end position="6"/>
    </location>
</feature>
<feature type="helix" evidence="4">
    <location>
        <begin position="10"/>
        <end position="22"/>
    </location>
</feature>
<feature type="strand" evidence="4">
    <location>
        <begin position="26"/>
        <end position="39"/>
    </location>
</feature>
<feature type="helix" evidence="4">
    <location>
        <begin position="41"/>
        <end position="43"/>
    </location>
</feature>
<feature type="helix" evidence="4">
    <location>
        <begin position="44"/>
        <end position="48"/>
    </location>
</feature>
<feature type="helix" evidence="4">
    <location>
        <begin position="55"/>
        <end position="57"/>
    </location>
</feature>
<feature type="strand" evidence="4">
    <location>
        <begin position="58"/>
        <end position="60"/>
    </location>
</feature>
<feature type="helix" evidence="4">
    <location>
        <begin position="63"/>
        <end position="68"/>
    </location>
</feature>
<feature type="strand" evidence="4">
    <location>
        <begin position="72"/>
        <end position="75"/>
    </location>
</feature>
<feature type="strand" evidence="4">
    <location>
        <begin position="77"/>
        <end position="83"/>
    </location>
</feature>
<feature type="turn" evidence="4">
    <location>
        <begin position="84"/>
        <end position="87"/>
    </location>
</feature>
<feature type="strand" evidence="4">
    <location>
        <begin position="88"/>
        <end position="93"/>
    </location>
</feature>
<feature type="turn" evidence="4">
    <location>
        <begin position="94"/>
        <end position="96"/>
    </location>
</feature>
<feature type="strand" evidence="4">
    <location>
        <begin position="99"/>
        <end position="103"/>
    </location>
</feature>
<feature type="strand" evidence="4">
    <location>
        <begin position="105"/>
        <end position="109"/>
    </location>
</feature>
<feature type="strand" evidence="4">
    <location>
        <begin position="113"/>
        <end position="115"/>
    </location>
</feature>
<feature type="turn" evidence="4">
    <location>
        <begin position="121"/>
        <end position="124"/>
    </location>
</feature>
<feature type="strand" evidence="4">
    <location>
        <begin position="125"/>
        <end position="129"/>
    </location>
</feature>
<feature type="helix" evidence="4">
    <location>
        <begin position="133"/>
        <end position="144"/>
    </location>
</feature>
<feature type="strand" evidence="4">
    <location>
        <begin position="151"/>
        <end position="155"/>
    </location>
</feature>
<feature type="helix" evidence="4">
    <location>
        <begin position="159"/>
        <end position="170"/>
    </location>
</feature>
<feature type="strand" evidence="4">
    <location>
        <begin position="174"/>
        <end position="183"/>
    </location>
</feature>
<feature type="turn" evidence="4">
    <location>
        <begin position="184"/>
        <end position="188"/>
    </location>
</feature>
<feature type="helix" evidence="4">
    <location>
        <begin position="191"/>
        <end position="202"/>
    </location>
</feature>
<feature type="turn" evidence="4">
    <location>
        <begin position="203"/>
        <end position="205"/>
    </location>
</feature>
<feature type="strand" evidence="4">
    <location>
        <begin position="206"/>
        <end position="211"/>
    </location>
</feature>
<feature type="strand" evidence="4">
    <location>
        <begin position="214"/>
        <end position="218"/>
    </location>
</feature>
<feature type="strand" evidence="4">
    <location>
        <begin position="220"/>
        <end position="222"/>
    </location>
</feature>
<feature type="strand" evidence="4">
    <location>
        <begin position="225"/>
        <end position="230"/>
    </location>
</feature>
<feature type="strand" evidence="4">
    <location>
        <begin position="232"/>
        <end position="234"/>
    </location>
</feature>
<feature type="strand" evidence="4">
    <location>
        <begin position="236"/>
        <end position="240"/>
    </location>
</feature>
<feature type="strand" evidence="4">
    <location>
        <begin position="244"/>
        <end position="247"/>
    </location>
</feature>
<feature type="helix" evidence="4">
    <location>
        <begin position="249"/>
        <end position="251"/>
    </location>
</feature>
<feature type="turn" evidence="4">
    <location>
        <begin position="252"/>
        <end position="254"/>
    </location>
</feature>
<feature type="strand" evidence="4">
    <location>
        <begin position="276"/>
        <end position="278"/>
    </location>
</feature>
<feature type="helix" evidence="4">
    <location>
        <begin position="280"/>
        <end position="282"/>
    </location>
</feature>
<feature type="strand" evidence="4">
    <location>
        <begin position="285"/>
        <end position="287"/>
    </location>
</feature>
<feature type="turn" evidence="4">
    <location>
        <begin position="288"/>
        <end position="291"/>
    </location>
</feature>
<feature type="strand" evidence="4">
    <location>
        <begin position="292"/>
        <end position="294"/>
    </location>
</feature>
<feature type="helix" evidence="4">
    <location>
        <begin position="299"/>
        <end position="311"/>
    </location>
</feature>
<feature type="strand" evidence="4">
    <location>
        <begin position="313"/>
        <end position="315"/>
    </location>
</feature>
<feature type="strand" evidence="4">
    <location>
        <begin position="327"/>
        <end position="331"/>
    </location>
</feature>
<feature type="strand" evidence="4">
    <location>
        <begin position="334"/>
        <end position="340"/>
    </location>
</feature>
<feature type="helix" evidence="4">
    <location>
        <begin position="343"/>
        <end position="349"/>
    </location>
</feature>
<feature type="strand" evidence="4">
    <location>
        <begin position="354"/>
        <end position="363"/>
    </location>
</feature>
<feature type="strand" evidence="4">
    <location>
        <begin position="372"/>
        <end position="379"/>
    </location>
</feature>
<feature type="turn" evidence="4">
    <location>
        <begin position="381"/>
        <end position="383"/>
    </location>
</feature>
<feature type="strand" evidence="4">
    <location>
        <begin position="385"/>
        <end position="395"/>
    </location>
</feature>
<feature type="helix" evidence="4">
    <location>
        <begin position="400"/>
        <end position="409"/>
    </location>
</feature>
<feature type="helix" evidence="4">
    <location>
        <begin position="414"/>
        <end position="418"/>
    </location>
</feature>
<feature type="turn" evidence="4">
    <location>
        <begin position="426"/>
        <end position="428"/>
    </location>
</feature>
<feature type="helix" evidence="4">
    <location>
        <begin position="434"/>
        <end position="445"/>
    </location>
</feature>
<evidence type="ECO:0000269" key="1">
    <source>
    </source>
</evidence>
<evidence type="ECO:0000269" key="2">
    <source>
    </source>
</evidence>
<evidence type="ECO:0000305" key="3"/>
<evidence type="ECO:0007829" key="4">
    <source>
        <dbReference type="PDB" id="1NHP"/>
    </source>
</evidence>
<dbReference type="EC" id="1.11.1.1"/>
<dbReference type="EMBL" id="X62755">
    <property type="protein sequence ID" value="CAA44611.1"/>
    <property type="molecule type" value="Genomic_DNA"/>
</dbReference>
<dbReference type="EMBL" id="AE016830">
    <property type="protein sequence ID" value="AAO81008.1"/>
    <property type="molecule type" value="Genomic_DNA"/>
</dbReference>
<dbReference type="PIR" id="S18332">
    <property type="entry name" value="S18332"/>
</dbReference>
<dbReference type="RefSeq" id="NP_814938.1">
    <property type="nucleotide sequence ID" value="NC_004668.1"/>
</dbReference>
<dbReference type="RefSeq" id="WP_002379347.1">
    <property type="nucleotide sequence ID" value="NZ_KE136528.1"/>
</dbReference>
<dbReference type="PDB" id="1F8W">
    <property type="method" value="X-ray"/>
    <property type="resolution" value="2.45 A"/>
    <property type="chains" value="A=1-447"/>
</dbReference>
<dbReference type="PDB" id="1JOA">
    <property type="method" value="X-ray"/>
    <property type="resolution" value="2.80 A"/>
    <property type="chains" value="A=1-447"/>
</dbReference>
<dbReference type="PDB" id="1NHP">
    <property type="method" value="X-ray"/>
    <property type="resolution" value="2.00 A"/>
    <property type="chains" value="A=1-447"/>
</dbReference>
<dbReference type="PDB" id="1NHQ">
    <property type="method" value="X-ray"/>
    <property type="resolution" value="2.00 A"/>
    <property type="chains" value="A=1-447"/>
</dbReference>
<dbReference type="PDB" id="1NHR">
    <property type="method" value="X-ray"/>
    <property type="resolution" value="2.10 A"/>
    <property type="chains" value="A=1-447"/>
</dbReference>
<dbReference type="PDB" id="1NHS">
    <property type="method" value="X-ray"/>
    <property type="resolution" value="2.00 A"/>
    <property type="chains" value="A=1-447"/>
</dbReference>
<dbReference type="PDB" id="1NPX">
    <property type="method" value="X-ray"/>
    <property type="resolution" value="2.16 A"/>
    <property type="chains" value="A=1-447"/>
</dbReference>
<dbReference type="PDB" id="2NPX">
    <property type="method" value="X-ray"/>
    <property type="resolution" value="2.40 A"/>
    <property type="chains" value="A=1-447"/>
</dbReference>
<dbReference type="PDBsum" id="1F8W"/>
<dbReference type="PDBsum" id="1JOA"/>
<dbReference type="PDBsum" id="1NHP"/>
<dbReference type="PDBsum" id="1NHQ"/>
<dbReference type="PDBsum" id="1NHR"/>
<dbReference type="PDBsum" id="1NHS"/>
<dbReference type="PDBsum" id="1NPX"/>
<dbReference type="PDBsum" id="2NPX"/>
<dbReference type="SMR" id="P37062"/>
<dbReference type="STRING" id="226185.EF_1211"/>
<dbReference type="DrugBank" id="DB03147">
    <property type="generic name" value="Flavin adenine dinucleotide"/>
</dbReference>
<dbReference type="DrugBank" id="DB03382">
    <property type="generic name" value="S-oxy-L-cysteine"/>
</dbReference>
<dbReference type="PeroxiBase" id="4010">
    <property type="entry name" value="EfNadPrx01"/>
</dbReference>
<dbReference type="EnsemblBacteria" id="AAO81008">
    <property type="protein sequence ID" value="AAO81008"/>
    <property type="gene ID" value="EF_1211"/>
</dbReference>
<dbReference type="KEGG" id="efa:EF1211"/>
<dbReference type="PATRIC" id="fig|226185.45.peg.2288"/>
<dbReference type="eggNOG" id="COG0446">
    <property type="taxonomic scope" value="Bacteria"/>
</dbReference>
<dbReference type="HOGENOM" id="CLU_003291_1_0_9"/>
<dbReference type="BRENDA" id="1.11.1.1">
    <property type="organism ID" value="2095"/>
</dbReference>
<dbReference type="SABIO-RK" id="P37062"/>
<dbReference type="EvolutionaryTrace" id="P37062"/>
<dbReference type="Proteomes" id="UP000001415">
    <property type="component" value="Chromosome"/>
</dbReference>
<dbReference type="GO" id="GO:0016692">
    <property type="term" value="F:NADH peroxidase activity"/>
    <property type="evidence" value="ECO:0007669"/>
    <property type="project" value="UniProtKB-EC"/>
</dbReference>
<dbReference type="Gene3D" id="3.30.390.30">
    <property type="match status" value="1"/>
</dbReference>
<dbReference type="Gene3D" id="3.50.50.60">
    <property type="entry name" value="FAD/NAD(P)-binding domain"/>
    <property type="match status" value="2"/>
</dbReference>
<dbReference type="InterPro" id="IPR050260">
    <property type="entry name" value="FAD-bd_OxRdtase"/>
</dbReference>
<dbReference type="InterPro" id="IPR036188">
    <property type="entry name" value="FAD/NAD-bd_sf"/>
</dbReference>
<dbReference type="InterPro" id="IPR023753">
    <property type="entry name" value="FAD/NAD-binding_dom"/>
</dbReference>
<dbReference type="InterPro" id="IPR016156">
    <property type="entry name" value="FAD/NAD-linked_Rdtase_dimer_sf"/>
</dbReference>
<dbReference type="InterPro" id="IPR004099">
    <property type="entry name" value="Pyr_nucl-diS_OxRdtase_dimer"/>
</dbReference>
<dbReference type="PANTHER" id="PTHR43429:SF1">
    <property type="entry name" value="NAD(P)H SULFUR OXIDOREDUCTASE (COA-DEPENDENT)"/>
    <property type="match status" value="1"/>
</dbReference>
<dbReference type="PANTHER" id="PTHR43429">
    <property type="entry name" value="PYRIDINE NUCLEOTIDE-DISULFIDE OXIDOREDUCTASE DOMAIN-CONTAINING"/>
    <property type="match status" value="1"/>
</dbReference>
<dbReference type="Pfam" id="PF07992">
    <property type="entry name" value="Pyr_redox_2"/>
    <property type="match status" value="1"/>
</dbReference>
<dbReference type="Pfam" id="PF02852">
    <property type="entry name" value="Pyr_redox_dim"/>
    <property type="match status" value="1"/>
</dbReference>
<dbReference type="PRINTS" id="PR00368">
    <property type="entry name" value="FADPNR"/>
</dbReference>
<dbReference type="PRINTS" id="PR00411">
    <property type="entry name" value="PNDRDTASEI"/>
</dbReference>
<dbReference type="SUPFAM" id="SSF51905">
    <property type="entry name" value="FAD/NAD(P)-binding domain"/>
    <property type="match status" value="1"/>
</dbReference>
<dbReference type="SUPFAM" id="SSF55424">
    <property type="entry name" value="FAD/NAD-linked reductases, dimerisation (C-terminal) domain"/>
    <property type="match status" value="1"/>
</dbReference>
<sequence length="447" mass="49566">MKVIVLGSSHGGYEAVEELLNLHPDAEIQWYEKGDFISFLSCGMQLYLEGKVKDVNSVRYMTGEKMESRGVNVFSNTEITAIQPKEHQVTVKDLVSGEERVENYDKLIISPGAVPFELDIPGKDLDNIYLMRGRQWAIKLKQKTVDPEVNNVVVIGSGYIGIEAAEAFAKAGKKVTVIDILDRPLGVYLDKEFTDVLTEEMEANNITIATGETVERYEGDGRVQKIVTDKNAYDADLVVVAVGVRPNTAWLKGTLELHPNGLIKTDEYMRTSEPDVFAVGDATLIKYNPADTEVNIALATNARKQGRFAVKNLEEPVKPFPGVQGSSGLAVFDYKFASTGINEVMAQKLGKETKAVTVVEDYLMDFNPDKQKAWFKLVYDPETTQILGAQLMSKADLTANINAISLAIQAKMTIEDLAYADFFFQPAFDKPWNIINTAALEAVKQER</sequence>
<reference key="1">
    <citation type="journal article" date="1991" name="J. Mol. Biol.">
        <title>Cloning, sequence and overexpression of NADH peroxidase from Streptococcus faecalis 10C1. Structural relationship with the flavoprotein disulfide reductases.</title>
        <authorList>
            <person name="Ross R.P."/>
            <person name="Claiborne A."/>
        </authorList>
    </citation>
    <scope>NUCLEOTIDE SEQUENCE [GENOMIC DNA]</scope>
    <scope>PARTIAL PROTEIN SEQUENCE</scope>
    <source>
        <strain>ATCC 11700 / DSM 20409 / NCIMB 8661 / 10C1</strain>
    </source>
</reference>
<reference key="2">
    <citation type="journal article" date="2003" name="Science">
        <title>Role of mobile DNA in the evolution of vancomycin-resistant Enterococcus faecalis.</title>
        <authorList>
            <person name="Paulsen I.T."/>
            <person name="Banerjei L."/>
            <person name="Myers G.S.A."/>
            <person name="Nelson K.E."/>
            <person name="Seshadri R."/>
            <person name="Read T.D."/>
            <person name="Fouts D.E."/>
            <person name="Eisen J.A."/>
            <person name="Gill S.R."/>
            <person name="Heidelberg J.F."/>
            <person name="Tettelin H."/>
            <person name="Dodson R.J."/>
            <person name="Umayam L.A."/>
            <person name="Brinkac L.M."/>
            <person name="Beanan M.J."/>
            <person name="Daugherty S.C."/>
            <person name="DeBoy R.T."/>
            <person name="Durkin S.A."/>
            <person name="Kolonay J.F."/>
            <person name="Madupu R."/>
            <person name="Nelson W.C."/>
            <person name="Vamathevan J.J."/>
            <person name="Tran B."/>
            <person name="Upton J."/>
            <person name="Hansen T."/>
            <person name="Shetty J."/>
            <person name="Khouri H.M."/>
            <person name="Utterback T.R."/>
            <person name="Radune D."/>
            <person name="Ketchum K.A."/>
            <person name="Dougherty B.A."/>
            <person name="Fraser C.M."/>
        </authorList>
    </citation>
    <scope>NUCLEOTIDE SEQUENCE [LARGE SCALE GENOMIC DNA]</scope>
    <source>
        <strain>ATCC 700802 / V583</strain>
    </source>
</reference>
<reference key="3">
    <citation type="journal article" date="1989" name="J. Biol. Chem.">
        <title>The non-flavin redox center of the streptococcal NADH peroxidase. I. Thiol reactivity and redox behavior in the presence of urea.</title>
        <authorList>
            <person name="Poole L.B."/>
            <person name="Claiborne A."/>
        </authorList>
    </citation>
    <scope>PROTEIN SEQUENCE OF 1-51</scope>
    <source>
        <strain>ATCC 11700 / DSM 20409 / NCIMB 8661 / 10C1</strain>
    </source>
</reference>
<reference key="4">
    <citation type="journal article" date="1991" name="J. Mol. Biol.">
        <title>Structure of NADH peroxidase from Streptococcus faecalis 10C1 refined at 2.16-A resolution.</title>
        <authorList>
            <person name="Stehle T."/>
            <person name="Ahmed S.A."/>
            <person name="Claiborne A."/>
            <person name="Schulz G.E."/>
        </authorList>
    </citation>
    <scope>X-RAY CRYSTALLOGRAPHY (2.16 ANGSTROMS)</scope>
    <source>
        <strain>ATCC 11700 / DSM 20409 / NCIMB 8661 / 10C1</strain>
    </source>
</reference>
<reference key="5">
    <citation type="journal article" date="1993" name="Eur. J. Biochem.">
        <title>NADH binding site and catalysis of NADH peroxidase.</title>
        <authorList>
            <person name="Stehle T."/>
            <person name="Claiborne A."/>
            <person name="Schulz G.E."/>
        </authorList>
    </citation>
    <scope>X-RAY CRYSTALLOGRAPHY (2.4 ANGSTROMS) IN COMPLEX WITH NAD AND FAD</scope>
    <source>
        <strain>ATCC 11700 / DSM 20409 / NCIMB 8661 / 10C1</strain>
    </source>
</reference>
<reference key="6">
    <citation type="journal article" date="1996" name="Biochemistry">
        <title>Structure of the native cysteine-sulfenic acid redox center of enterococcal NADH peroxidase refined at 2.8-A resolution.</title>
        <authorList>
            <person name="Yeh J.I."/>
            <person name="Claiborne A."/>
            <person name="Hol W.G.J."/>
        </authorList>
    </citation>
    <scope>X-RAY CRYSTALLOGRAPHY (2.8 ANGSTROMS) IN COMPLEX WITH FAD</scope>
    <scope>ACTIVE SITE</scope>
    <scope>OXIDATION AT CYS-42</scope>
    <source>
        <strain>ATCC 11700 / DSM 20409 / NCIMB 8661 / 10C1</strain>
    </source>
</reference>
<reference key="7">
    <citation type="journal article" date="1997" name="Biochemistry">
        <title>13C NMR analysis of the cysteine-sulfenic acid redox center of enterococcal NADH peroxidase.</title>
        <authorList>
            <person name="Crane E.J. III"/>
            <person name="Vervoort J."/>
            <person name="Clairborne A."/>
        </authorList>
    </citation>
    <scope>STRUCTURE BY NMR</scope>
    <source>
        <strain>ATCC 11700 / DSM 20409 / NCIMB 8661 / 10C1</strain>
    </source>
</reference>
<keyword id="KW-0002">3D-structure</keyword>
<keyword id="KW-0903">Direct protein sequencing</keyword>
<keyword id="KW-0274">FAD</keyword>
<keyword id="KW-0285">Flavoprotein</keyword>
<keyword id="KW-0520">NAD</keyword>
<keyword id="KW-0558">Oxidation</keyword>
<keyword id="KW-0560">Oxidoreductase</keyword>
<keyword id="KW-0575">Peroxidase</keyword>
<keyword id="KW-0676">Redox-active center</keyword>
<keyword id="KW-1185">Reference proteome</keyword>
<proteinExistence type="evidence at protein level"/>
<gene>
    <name type="primary">npr</name>
    <name type="ordered locus">EF_1211</name>
</gene>
<name>NAPE_ENTFA</name>
<accession>P37062</accession>
<organism>
    <name type="scientific">Enterococcus faecalis (strain ATCC 700802 / V583)</name>
    <dbReference type="NCBI Taxonomy" id="226185"/>
    <lineage>
        <taxon>Bacteria</taxon>
        <taxon>Bacillati</taxon>
        <taxon>Bacillota</taxon>
        <taxon>Bacilli</taxon>
        <taxon>Lactobacillales</taxon>
        <taxon>Enterococcaceae</taxon>
        <taxon>Enterococcus</taxon>
    </lineage>
</organism>
<protein>
    <recommendedName>
        <fullName>NADH peroxidase</fullName>
        <shortName>NPXase</shortName>
        <shortName>Npx</shortName>
        <ecNumber>1.11.1.1</ecNumber>
    </recommendedName>
</protein>
<comment type="function">
    <text>Peroxidase whose active site is a redox-active cysteine-sulfenic acid.</text>
</comment>
<comment type="catalytic activity">
    <reaction>
        <text>H2O2 + NADH + H(+) = NAD(+) + 2 H2O</text>
        <dbReference type="Rhea" id="RHEA:18509"/>
        <dbReference type="ChEBI" id="CHEBI:15377"/>
        <dbReference type="ChEBI" id="CHEBI:15378"/>
        <dbReference type="ChEBI" id="CHEBI:16240"/>
        <dbReference type="ChEBI" id="CHEBI:57540"/>
        <dbReference type="ChEBI" id="CHEBI:57945"/>
        <dbReference type="EC" id="1.11.1.1"/>
    </reaction>
</comment>
<comment type="cofactor">
    <cofactor>
        <name>FAD</name>
        <dbReference type="ChEBI" id="CHEBI:57692"/>
    </cofactor>
    <text>Binds 1 FAD per subunit.</text>
</comment>
<comment type="subunit">
    <text evidence="1 2">Homotetramer.</text>
</comment>
<comment type="miscellaneous">
    <text>The active site is the redox-active Cys-42 oxidized to Cys-SOH. The oxidized form is stabilized by a hydrogen bond formation with His-10.</text>
</comment>
<comment type="similarity">
    <text evidence="3">Belongs to the class-III pyridine nucleotide-disulfide oxidoreductase family.</text>
</comment>